<feature type="chain" id="PRO_1000016609" description="tRNA uridine 5-carboxymethylaminomethyl modification enzyme MnmG">
    <location>
        <begin position="1"/>
        <end position="621"/>
    </location>
</feature>
<feature type="binding site" evidence="1">
    <location>
        <begin position="11"/>
        <end position="16"/>
    </location>
    <ligand>
        <name>FAD</name>
        <dbReference type="ChEBI" id="CHEBI:57692"/>
    </ligand>
</feature>
<feature type="binding site" evidence="1">
    <location>
        <begin position="270"/>
        <end position="284"/>
    </location>
    <ligand>
        <name>NAD(+)</name>
        <dbReference type="ChEBI" id="CHEBI:57540"/>
    </ligand>
</feature>
<dbReference type="EMBL" id="AM260522">
    <property type="protein sequence ID" value="CAK00227.1"/>
    <property type="molecule type" value="Genomic_DNA"/>
</dbReference>
<dbReference type="RefSeq" id="WP_011578314.1">
    <property type="nucleotide sequence ID" value="NC_008229.1"/>
</dbReference>
<dbReference type="SMR" id="Q17VU9"/>
<dbReference type="STRING" id="382638.Hac_1506"/>
<dbReference type="GeneID" id="31758778"/>
<dbReference type="KEGG" id="hac:Hac_1506"/>
<dbReference type="eggNOG" id="COG0445">
    <property type="taxonomic scope" value="Bacteria"/>
</dbReference>
<dbReference type="HOGENOM" id="CLU_007831_2_2_7"/>
<dbReference type="OrthoDB" id="9815560at2"/>
<dbReference type="BioCyc" id="HACI382638:HAC_RS06385-MONOMER"/>
<dbReference type="Proteomes" id="UP000000775">
    <property type="component" value="Chromosome"/>
</dbReference>
<dbReference type="GO" id="GO:0005829">
    <property type="term" value="C:cytosol"/>
    <property type="evidence" value="ECO:0007669"/>
    <property type="project" value="TreeGrafter"/>
</dbReference>
<dbReference type="GO" id="GO:0050660">
    <property type="term" value="F:flavin adenine dinucleotide binding"/>
    <property type="evidence" value="ECO:0007669"/>
    <property type="project" value="UniProtKB-UniRule"/>
</dbReference>
<dbReference type="GO" id="GO:0030488">
    <property type="term" value="P:tRNA methylation"/>
    <property type="evidence" value="ECO:0007669"/>
    <property type="project" value="TreeGrafter"/>
</dbReference>
<dbReference type="GO" id="GO:0002098">
    <property type="term" value="P:tRNA wobble uridine modification"/>
    <property type="evidence" value="ECO:0007669"/>
    <property type="project" value="InterPro"/>
</dbReference>
<dbReference type="FunFam" id="1.10.150.570:FF:000001">
    <property type="entry name" value="tRNA uridine 5-carboxymethylaminomethyl modification enzyme MnmG"/>
    <property type="match status" value="1"/>
</dbReference>
<dbReference type="FunFam" id="3.50.50.60:FF:000002">
    <property type="entry name" value="tRNA uridine 5-carboxymethylaminomethyl modification enzyme MnmG"/>
    <property type="match status" value="1"/>
</dbReference>
<dbReference type="Gene3D" id="3.50.50.60">
    <property type="entry name" value="FAD/NAD(P)-binding domain"/>
    <property type="match status" value="2"/>
</dbReference>
<dbReference type="Gene3D" id="1.10.150.570">
    <property type="entry name" value="GidA associated domain, C-terminal subdomain"/>
    <property type="match status" value="1"/>
</dbReference>
<dbReference type="Gene3D" id="1.10.10.1800">
    <property type="entry name" value="tRNA uridine 5-carboxymethylaminomethyl modification enzyme MnmG/GidA"/>
    <property type="match status" value="1"/>
</dbReference>
<dbReference type="HAMAP" id="MF_00129">
    <property type="entry name" value="MnmG_GidA"/>
    <property type="match status" value="1"/>
</dbReference>
<dbReference type="InterPro" id="IPR036188">
    <property type="entry name" value="FAD/NAD-bd_sf"/>
</dbReference>
<dbReference type="InterPro" id="IPR049312">
    <property type="entry name" value="GIDA_C_N"/>
</dbReference>
<dbReference type="InterPro" id="IPR004416">
    <property type="entry name" value="MnmG"/>
</dbReference>
<dbReference type="InterPro" id="IPR002218">
    <property type="entry name" value="MnmG-rel"/>
</dbReference>
<dbReference type="InterPro" id="IPR020595">
    <property type="entry name" value="MnmG-rel_CS"/>
</dbReference>
<dbReference type="InterPro" id="IPR026904">
    <property type="entry name" value="MnmG_C"/>
</dbReference>
<dbReference type="InterPro" id="IPR047001">
    <property type="entry name" value="MnmG_C_subdom"/>
</dbReference>
<dbReference type="InterPro" id="IPR044920">
    <property type="entry name" value="MnmG_C_subdom_sf"/>
</dbReference>
<dbReference type="InterPro" id="IPR040131">
    <property type="entry name" value="MnmG_N"/>
</dbReference>
<dbReference type="NCBIfam" id="TIGR00136">
    <property type="entry name" value="mnmG_gidA"/>
    <property type="match status" value="1"/>
</dbReference>
<dbReference type="PANTHER" id="PTHR11806">
    <property type="entry name" value="GLUCOSE INHIBITED DIVISION PROTEIN A"/>
    <property type="match status" value="1"/>
</dbReference>
<dbReference type="PANTHER" id="PTHR11806:SF0">
    <property type="entry name" value="PROTEIN MTO1 HOMOLOG, MITOCHONDRIAL"/>
    <property type="match status" value="1"/>
</dbReference>
<dbReference type="Pfam" id="PF01134">
    <property type="entry name" value="GIDA"/>
    <property type="match status" value="1"/>
</dbReference>
<dbReference type="Pfam" id="PF21680">
    <property type="entry name" value="GIDA_C_1st"/>
    <property type="match status" value="1"/>
</dbReference>
<dbReference type="Pfam" id="PF13932">
    <property type="entry name" value="SAM_GIDA_C"/>
    <property type="match status" value="1"/>
</dbReference>
<dbReference type="PRINTS" id="PR00411">
    <property type="entry name" value="PNDRDTASEI"/>
</dbReference>
<dbReference type="SMART" id="SM01228">
    <property type="entry name" value="GIDA_assoc_3"/>
    <property type="match status" value="1"/>
</dbReference>
<dbReference type="SUPFAM" id="SSF51905">
    <property type="entry name" value="FAD/NAD(P)-binding domain"/>
    <property type="match status" value="1"/>
</dbReference>
<dbReference type="PROSITE" id="PS01280">
    <property type="entry name" value="GIDA_1"/>
    <property type="match status" value="1"/>
</dbReference>
<dbReference type="PROSITE" id="PS01281">
    <property type="entry name" value="GIDA_2"/>
    <property type="match status" value="1"/>
</dbReference>
<reference key="1">
    <citation type="journal article" date="2006" name="PLoS Genet.">
        <title>Who ate whom? Adaptive Helicobacter genomic changes that accompanied a host jump from early humans to large felines.</title>
        <authorList>
            <person name="Eppinger M."/>
            <person name="Baar C."/>
            <person name="Linz B."/>
            <person name="Raddatz G."/>
            <person name="Lanz C."/>
            <person name="Keller H."/>
            <person name="Morelli G."/>
            <person name="Gressmann H."/>
            <person name="Achtman M."/>
            <person name="Schuster S.C."/>
        </authorList>
    </citation>
    <scope>NUCLEOTIDE SEQUENCE [LARGE SCALE GENOMIC DNA]</scope>
    <source>
        <strain>Sheeba</strain>
    </source>
</reference>
<keyword id="KW-0963">Cytoplasm</keyword>
<keyword id="KW-0274">FAD</keyword>
<keyword id="KW-0285">Flavoprotein</keyword>
<keyword id="KW-0520">NAD</keyword>
<keyword id="KW-0819">tRNA processing</keyword>
<organism>
    <name type="scientific">Helicobacter acinonychis (strain Sheeba)</name>
    <dbReference type="NCBI Taxonomy" id="382638"/>
    <lineage>
        <taxon>Bacteria</taxon>
        <taxon>Pseudomonadati</taxon>
        <taxon>Campylobacterota</taxon>
        <taxon>Epsilonproteobacteria</taxon>
        <taxon>Campylobacterales</taxon>
        <taxon>Helicobacteraceae</taxon>
        <taxon>Helicobacter</taxon>
    </lineage>
</organism>
<evidence type="ECO:0000255" key="1">
    <source>
        <dbReference type="HAMAP-Rule" id="MF_00129"/>
    </source>
</evidence>
<sequence length="621" mass="69651">MVKESDILVVGGGHAGIEASLIAAKMGAKTHLITMLIDTIGLASCNPAIGGLGKGHLTKEVDVLGGAMGIITDNSGLQYRVLNASKGPAVRGTRAQIDMDTYRIFARNLVLNTPNLSVSQEMTESLIIENDEVVGVTTNINNTYRAKKVIITTGTFLKGVVHIGEHQNQNGRFGENASNSLALNLRELGFKVERLKTGTCPRVAGKSINFEGLEEHFGDTNPPYFSYKTKNFNPTQLSCFITYTNPTTHQIIRDNFHRAPLFSGQIEGIGPRYCPSIEDKINRFSEKERHQLFLEPQTIHKSEYYINGLSTSLPLDVQEETIHSIKGLENALITRYGYAIEYDFIQPTELTHTLETKKIKGLYLAGQINGTTGYEEAAAQGLMAGINAVLALKNQAPFILKRNEAYIGVLIDDLVTKGTNEPYRMFTSRAEYRLLLREDNTLFRLGEHAYHLGLMEKDFYKELKKDKQEIQENLKRLKECVLTPSKEVLKRLSELDENPINDKINGVDLLARDSFSLEKMRSFFSFLAPLSERVLEQIKIECKYNIYIEKQHENIAKMDSMLKVSIPKDFVFKGIPGLSLEAVEKLEKFRPKSLFEASEISGITPANLDVLHLYIHLRKNS</sequence>
<name>MNMG_HELAH</name>
<proteinExistence type="inferred from homology"/>
<gene>
    <name evidence="1" type="primary">mnmG</name>
    <name evidence="1" type="synonym">gidA</name>
    <name type="ordered locus">Hac_1506</name>
</gene>
<comment type="function">
    <text evidence="1">NAD-binding protein involved in the addition of a carboxymethylaminomethyl (cmnm) group at the wobble position (U34) of certain tRNAs, forming tRNA-cmnm(5)s(2)U34.</text>
</comment>
<comment type="cofactor">
    <cofactor evidence="1">
        <name>FAD</name>
        <dbReference type="ChEBI" id="CHEBI:57692"/>
    </cofactor>
</comment>
<comment type="subunit">
    <text evidence="1">Homodimer. Heterotetramer of two MnmE and two MnmG subunits.</text>
</comment>
<comment type="subcellular location">
    <subcellularLocation>
        <location evidence="1">Cytoplasm</location>
    </subcellularLocation>
</comment>
<comment type="similarity">
    <text evidence="1">Belongs to the MnmG family.</text>
</comment>
<protein>
    <recommendedName>
        <fullName evidence="1">tRNA uridine 5-carboxymethylaminomethyl modification enzyme MnmG</fullName>
    </recommendedName>
    <alternativeName>
        <fullName evidence="1">Glucose-inhibited division protein A</fullName>
    </alternativeName>
</protein>
<accession>Q17VU9</accession>